<sequence>MTEDFPKILPLLVEEDTFLYPFMIAPIFLQNNASIKAVAYAKNNKSLVFIACQKDKLNDNEAPYYDVGVIGSVMREANMPNGRVKLLFNGIAKGRILEPAKENEQGFLEAQISPIEYLEYDKENIQAIVEVLKEKVITLANVSSLFPPDLIKALEDNDDPNRIADLIAAALHLKKDQAYFLFANNNTEQRLLDLIDIVIEETKTQKLQKEIKSKVHQKMEQTNKEYFLKEQLKQIQKELGTDKQRDEDLNQYYQKLESIKPFLKEEAFKEIKKQIDRLSRTHADSSDSATLQNYVETMLDVPFGQYEKKALDIKHVKEQLDNDHYSLKRPKERIVEYFATMQLLEMRHKKKPEKKDKTKGTILCFYGPPGVGKTSLANSIAKAIERPLVRIALGGLEDVNELRGHRRTYIGSMPGRIVQGLIEAKKMNPVMVLDEIDKVDRSVRGDPASALLEILDPEQNIAFRDHYANFSIDLSQVIFIATANNIDRIPAPLRDRMEFISVSSYTPSEKEEIAKNYLIPQELEKHALKPSEVDISHECLKLIIEKYTREAGVRDLRRQIATIMRKAALKYLEDNPHKKGRTKKSEDKDKKGGNEENEKRGESKDFCVSITPDNLKEYLERMVFEIDPIDEENKIGIVNGLAWTPVGGDVLKIEAVKIRGKGELKLTGSLGDVMKESAIIAFSVVKVLLDNETLKVPKIPSETDAENKKKKKVLKVYNAYDLHLHVPEGATPKDGPSAGIAMASVMASILCDRAIRSEVAMTGELTLSGEVLPIGGLKEKLIAAFKAGIKTALIPVKNYERDLDEIPTEVRENLNIVAVKNIAEVLEKTLL</sequence>
<organism>
    <name type="scientific">Helicobacter pylori (strain J99 / ATCC 700824)</name>
    <name type="common">Campylobacter pylori J99</name>
    <dbReference type="NCBI Taxonomy" id="85963"/>
    <lineage>
        <taxon>Bacteria</taxon>
        <taxon>Pseudomonadati</taxon>
        <taxon>Campylobacterota</taxon>
        <taxon>Epsilonproteobacteria</taxon>
        <taxon>Campylobacterales</taxon>
        <taxon>Helicobacteraceae</taxon>
        <taxon>Helicobacter</taxon>
    </lineage>
</organism>
<name>LON_HELPJ</name>
<protein>
    <recommendedName>
        <fullName evidence="1">Lon protease</fullName>
        <ecNumber evidence="1">3.4.21.53</ecNumber>
    </recommendedName>
    <alternativeName>
        <fullName evidence="1">ATP-dependent protease La</fullName>
    </alternativeName>
</protein>
<evidence type="ECO:0000255" key="1">
    <source>
        <dbReference type="HAMAP-Rule" id="MF_01973"/>
    </source>
</evidence>
<evidence type="ECO:0000255" key="2">
    <source>
        <dbReference type="PROSITE-ProRule" id="PRU01122"/>
    </source>
</evidence>
<evidence type="ECO:0000255" key="3">
    <source>
        <dbReference type="PROSITE-ProRule" id="PRU01123"/>
    </source>
</evidence>
<evidence type="ECO:0000256" key="4">
    <source>
        <dbReference type="SAM" id="MobiDB-lite"/>
    </source>
</evidence>
<feature type="chain" id="PRO_0000076138" description="Lon protease">
    <location>
        <begin position="1"/>
        <end position="831"/>
    </location>
</feature>
<feature type="domain" description="Lon N-terminal" evidence="3">
    <location>
        <begin position="9"/>
        <end position="202"/>
    </location>
</feature>
<feature type="domain" description="Lon proteolytic" evidence="2">
    <location>
        <begin position="632"/>
        <end position="831"/>
    </location>
</feature>
<feature type="region of interest" description="Disordered" evidence="4">
    <location>
        <begin position="574"/>
        <end position="605"/>
    </location>
</feature>
<feature type="active site" evidence="1">
    <location>
        <position position="737"/>
    </location>
</feature>
<feature type="active site" evidence="1">
    <location>
        <position position="780"/>
    </location>
</feature>
<feature type="binding site" evidence="1">
    <location>
        <begin position="367"/>
        <end position="374"/>
    </location>
    <ligand>
        <name>ATP</name>
        <dbReference type="ChEBI" id="CHEBI:30616"/>
    </ligand>
</feature>
<accession>Q9ZJL3</accession>
<reference key="1">
    <citation type="journal article" date="1999" name="Nature">
        <title>Genomic sequence comparison of two unrelated isolates of the human gastric pathogen Helicobacter pylori.</title>
        <authorList>
            <person name="Alm R.A."/>
            <person name="Ling L.-S.L."/>
            <person name="Moir D.T."/>
            <person name="King B.L."/>
            <person name="Brown E.D."/>
            <person name="Doig P.C."/>
            <person name="Smith D.R."/>
            <person name="Noonan B."/>
            <person name="Guild B.C."/>
            <person name="deJonge B.L."/>
            <person name="Carmel G."/>
            <person name="Tummino P.J."/>
            <person name="Caruso A."/>
            <person name="Uria-Nickelsen M."/>
            <person name="Mills D.M."/>
            <person name="Ives C."/>
            <person name="Gibson R."/>
            <person name="Merberg D."/>
            <person name="Mills S.D."/>
            <person name="Jiang Q."/>
            <person name="Taylor D.E."/>
            <person name="Vovis G.F."/>
            <person name="Trust T.J."/>
        </authorList>
    </citation>
    <scope>NUCLEOTIDE SEQUENCE [LARGE SCALE GENOMIC DNA]</scope>
    <source>
        <strain>J99 / ATCC 700824</strain>
    </source>
</reference>
<comment type="function">
    <text evidence="1">ATP-dependent serine protease that mediates the selective degradation of mutant and abnormal proteins as well as certain short-lived regulatory proteins. Required for cellular homeostasis and for survival from DNA damage and developmental changes induced by stress. Degrades polypeptides processively to yield small peptide fragments that are 5 to 10 amino acids long. Binds to DNA in a double-stranded, site-specific manner.</text>
</comment>
<comment type="catalytic activity">
    <reaction evidence="1">
        <text>Hydrolysis of proteins in presence of ATP.</text>
        <dbReference type="EC" id="3.4.21.53"/>
    </reaction>
</comment>
<comment type="subunit">
    <text evidence="1">Homohexamer. Organized in a ring with a central cavity.</text>
</comment>
<comment type="subcellular location">
    <subcellularLocation>
        <location evidence="1">Cytoplasm</location>
    </subcellularLocation>
</comment>
<comment type="induction">
    <text evidence="1">By heat shock.</text>
</comment>
<comment type="similarity">
    <text evidence="1">Belongs to the peptidase S16 family.</text>
</comment>
<proteinExistence type="inferred from homology"/>
<keyword id="KW-0067">ATP-binding</keyword>
<keyword id="KW-0963">Cytoplasm</keyword>
<keyword id="KW-0378">Hydrolase</keyword>
<keyword id="KW-0547">Nucleotide-binding</keyword>
<keyword id="KW-0645">Protease</keyword>
<keyword id="KW-0720">Serine protease</keyword>
<keyword id="KW-0346">Stress response</keyword>
<dbReference type="EC" id="3.4.21.53" evidence="1"/>
<dbReference type="EMBL" id="AE001439">
    <property type="protein sequence ID" value="AAD06875.1"/>
    <property type="molecule type" value="Genomic_DNA"/>
</dbReference>
<dbReference type="PIR" id="A71825">
    <property type="entry name" value="A71825"/>
</dbReference>
<dbReference type="RefSeq" id="WP_000133766.1">
    <property type="nucleotide sequence ID" value="NC_000921.1"/>
</dbReference>
<dbReference type="SMR" id="Q9ZJL3"/>
<dbReference type="MEROPS" id="S16.001"/>
<dbReference type="KEGG" id="hpj:jhp_1293"/>
<dbReference type="PATRIC" id="fig|85963.30.peg.1273"/>
<dbReference type="eggNOG" id="COG0466">
    <property type="taxonomic scope" value="Bacteria"/>
</dbReference>
<dbReference type="Proteomes" id="UP000000804">
    <property type="component" value="Chromosome"/>
</dbReference>
<dbReference type="GO" id="GO:0005737">
    <property type="term" value="C:cytoplasm"/>
    <property type="evidence" value="ECO:0007669"/>
    <property type="project" value="UniProtKB-SubCell"/>
</dbReference>
<dbReference type="GO" id="GO:0005524">
    <property type="term" value="F:ATP binding"/>
    <property type="evidence" value="ECO:0007669"/>
    <property type="project" value="UniProtKB-UniRule"/>
</dbReference>
<dbReference type="GO" id="GO:0016887">
    <property type="term" value="F:ATP hydrolysis activity"/>
    <property type="evidence" value="ECO:0007669"/>
    <property type="project" value="UniProtKB-UniRule"/>
</dbReference>
<dbReference type="GO" id="GO:0004176">
    <property type="term" value="F:ATP-dependent peptidase activity"/>
    <property type="evidence" value="ECO:0007669"/>
    <property type="project" value="UniProtKB-UniRule"/>
</dbReference>
<dbReference type="GO" id="GO:0043565">
    <property type="term" value="F:sequence-specific DNA binding"/>
    <property type="evidence" value="ECO:0007669"/>
    <property type="project" value="UniProtKB-UniRule"/>
</dbReference>
<dbReference type="GO" id="GO:0004252">
    <property type="term" value="F:serine-type endopeptidase activity"/>
    <property type="evidence" value="ECO:0007669"/>
    <property type="project" value="UniProtKB-UniRule"/>
</dbReference>
<dbReference type="GO" id="GO:0034605">
    <property type="term" value="P:cellular response to heat"/>
    <property type="evidence" value="ECO:0007669"/>
    <property type="project" value="UniProtKB-UniRule"/>
</dbReference>
<dbReference type="GO" id="GO:0006515">
    <property type="term" value="P:protein quality control for misfolded or incompletely synthesized proteins"/>
    <property type="evidence" value="ECO:0007669"/>
    <property type="project" value="UniProtKB-UniRule"/>
</dbReference>
<dbReference type="CDD" id="cd19500">
    <property type="entry name" value="RecA-like_Lon"/>
    <property type="match status" value="1"/>
</dbReference>
<dbReference type="FunFam" id="3.40.50.300:FF:000021">
    <property type="entry name" value="Lon protease homolog"/>
    <property type="match status" value="1"/>
</dbReference>
<dbReference type="Gene3D" id="1.10.8.60">
    <property type="match status" value="1"/>
</dbReference>
<dbReference type="Gene3D" id="1.20.5.5270">
    <property type="match status" value="1"/>
</dbReference>
<dbReference type="Gene3D" id="1.20.58.1480">
    <property type="match status" value="1"/>
</dbReference>
<dbReference type="Gene3D" id="3.30.230.10">
    <property type="match status" value="1"/>
</dbReference>
<dbReference type="Gene3D" id="2.30.130.40">
    <property type="entry name" value="LON domain-like"/>
    <property type="match status" value="1"/>
</dbReference>
<dbReference type="Gene3D" id="3.40.50.300">
    <property type="entry name" value="P-loop containing nucleotide triphosphate hydrolases"/>
    <property type="match status" value="1"/>
</dbReference>
<dbReference type="HAMAP" id="MF_01973">
    <property type="entry name" value="lon_bact"/>
    <property type="match status" value="1"/>
</dbReference>
<dbReference type="InterPro" id="IPR003593">
    <property type="entry name" value="AAA+_ATPase"/>
</dbReference>
<dbReference type="InterPro" id="IPR003959">
    <property type="entry name" value="ATPase_AAA_core"/>
</dbReference>
<dbReference type="InterPro" id="IPR027543">
    <property type="entry name" value="Lon_bac"/>
</dbReference>
<dbReference type="InterPro" id="IPR004815">
    <property type="entry name" value="Lon_bac/euk-typ"/>
</dbReference>
<dbReference type="InterPro" id="IPR054594">
    <property type="entry name" value="Lon_lid"/>
</dbReference>
<dbReference type="InterPro" id="IPR008269">
    <property type="entry name" value="Lon_proteolytic"/>
</dbReference>
<dbReference type="InterPro" id="IPR027065">
    <property type="entry name" value="Lon_Prtase"/>
</dbReference>
<dbReference type="InterPro" id="IPR003111">
    <property type="entry name" value="Lon_prtase_N"/>
</dbReference>
<dbReference type="InterPro" id="IPR046336">
    <property type="entry name" value="Lon_prtase_N_sf"/>
</dbReference>
<dbReference type="InterPro" id="IPR027417">
    <property type="entry name" value="P-loop_NTPase"/>
</dbReference>
<dbReference type="InterPro" id="IPR008268">
    <property type="entry name" value="Peptidase_S16_AS"/>
</dbReference>
<dbReference type="InterPro" id="IPR015947">
    <property type="entry name" value="PUA-like_sf"/>
</dbReference>
<dbReference type="InterPro" id="IPR020568">
    <property type="entry name" value="Ribosomal_Su5_D2-typ_SF"/>
</dbReference>
<dbReference type="InterPro" id="IPR014721">
    <property type="entry name" value="Ribsml_uS5_D2-typ_fold_subgr"/>
</dbReference>
<dbReference type="NCBIfam" id="TIGR00763">
    <property type="entry name" value="lon"/>
    <property type="match status" value="1"/>
</dbReference>
<dbReference type="PANTHER" id="PTHR43718">
    <property type="entry name" value="LON PROTEASE"/>
    <property type="match status" value="1"/>
</dbReference>
<dbReference type="PANTHER" id="PTHR43718:SF2">
    <property type="entry name" value="LON PROTEASE HOMOLOG, MITOCHONDRIAL"/>
    <property type="match status" value="1"/>
</dbReference>
<dbReference type="Pfam" id="PF00004">
    <property type="entry name" value="AAA"/>
    <property type="match status" value="1"/>
</dbReference>
<dbReference type="Pfam" id="PF05362">
    <property type="entry name" value="Lon_C"/>
    <property type="match status" value="1"/>
</dbReference>
<dbReference type="Pfam" id="PF22667">
    <property type="entry name" value="Lon_lid"/>
    <property type="match status" value="1"/>
</dbReference>
<dbReference type="Pfam" id="PF02190">
    <property type="entry name" value="LON_substr_bdg"/>
    <property type="match status" value="1"/>
</dbReference>
<dbReference type="PIRSF" id="PIRSF001174">
    <property type="entry name" value="Lon_proteas"/>
    <property type="match status" value="1"/>
</dbReference>
<dbReference type="PRINTS" id="PR00830">
    <property type="entry name" value="ENDOLAPTASE"/>
</dbReference>
<dbReference type="SMART" id="SM00382">
    <property type="entry name" value="AAA"/>
    <property type="match status" value="1"/>
</dbReference>
<dbReference type="SMART" id="SM00464">
    <property type="entry name" value="LON"/>
    <property type="match status" value="1"/>
</dbReference>
<dbReference type="SUPFAM" id="SSF52540">
    <property type="entry name" value="P-loop containing nucleoside triphosphate hydrolases"/>
    <property type="match status" value="1"/>
</dbReference>
<dbReference type="SUPFAM" id="SSF88697">
    <property type="entry name" value="PUA domain-like"/>
    <property type="match status" value="1"/>
</dbReference>
<dbReference type="SUPFAM" id="SSF54211">
    <property type="entry name" value="Ribosomal protein S5 domain 2-like"/>
    <property type="match status" value="1"/>
</dbReference>
<dbReference type="PROSITE" id="PS51787">
    <property type="entry name" value="LON_N"/>
    <property type="match status" value="1"/>
</dbReference>
<dbReference type="PROSITE" id="PS51786">
    <property type="entry name" value="LON_PROTEOLYTIC"/>
    <property type="match status" value="1"/>
</dbReference>
<dbReference type="PROSITE" id="PS01046">
    <property type="entry name" value="LON_SER"/>
    <property type="match status" value="1"/>
</dbReference>
<gene>
    <name evidence="1" type="primary">lon</name>
    <name type="ordered locus">jhp_1293</name>
</gene>